<keyword id="KW-0460">Magnesium</keyword>
<keyword id="KW-0479">Metal-binding</keyword>
<keyword id="KW-0489">Methyltransferase</keyword>
<keyword id="KW-0949">S-adenosyl-L-methionine</keyword>
<keyword id="KW-0808">Transferase</keyword>
<feature type="chain" id="PRO_0000444371" description="dTDP-4-amino-2,3,4,6-tetradeoxy-D-glucose N,N-dimethyltransferase">
    <location>
        <begin position="1"/>
        <end position="249"/>
    </location>
</feature>
<feature type="binding site" evidence="1">
    <location>
        <position position="30"/>
    </location>
    <ligand>
        <name>substrate</name>
    </ligand>
</feature>
<feature type="binding site" evidence="1">
    <location>
        <position position="59"/>
    </location>
    <ligand>
        <name>S-adenosyl-L-methionine</name>
        <dbReference type="ChEBI" id="CHEBI:59789"/>
    </ligand>
</feature>
<feature type="binding site" evidence="1">
    <location>
        <position position="80"/>
    </location>
    <ligand>
        <name>S-adenosyl-L-methionine</name>
        <dbReference type="ChEBI" id="CHEBI:59789"/>
    </ligand>
</feature>
<feature type="binding site" evidence="1">
    <location>
        <begin position="102"/>
        <end position="103"/>
    </location>
    <ligand>
        <name>S-adenosyl-L-methionine</name>
        <dbReference type="ChEBI" id="CHEBI:59789"/>
    </ligand>
</feature>
<feature type="binding site" evidence="1">
    <location>
        <position position="165"/>
    </location>
    <ligand>
        <name>substrate</name>
    </ligand>
</feature>
<feature type="binding site" evidence="1">
    <location>
        <begin position="178"/>
        <end position="182"/>
    </location>
    <ligand>
        <name>substrate</name>
    </ligand>
</feature>
<feature type="binding site" evidence="1">
    <location>
        <position position="241"/>
    </location>
    <ligand>
        <name>substrate</name>
    </ligand>
</feature>
<reference key="1">
    <citation type="journal article" date="2001" name="Chem. Biol.">
        <title>Cloning and analysis of the spinosad biosynthetic gene cluster of Saccharopolyspora spinosa.</title>
        <authorList>
            <person name="Waldron C."/>
            <person name="Matsushima P."/>
            <person name="Rosteck P.R. Jr."/>
            <person name="Broughton M.C."/>
            <person name="Turner J."/>
            <person name="Madduri K."/>
            <person name="Crawford K.P."/>
            <person name="Merlo D.J."/>
            <person name="Baltz R.H."/>
        </authorList>
    </citation>
    <scope>NUCLEOTIDE SEQUENCE [GENOMIC DNA]</scope>
    <scope>FUNCTION</scope>
</reference>
<reference key="2">
    <citation type="journal article" date="2008" name="J. Am. Chem. Soc.">
        <title>In vitro characterization of the enzymes involved in TDP-D-forosamine biosynthesis in the spinosyn pathway of Saccharopolyspora spinosa.</title>
        <authorList>
            <person name="Hong L."/>
            <person name="Zhao Z."/>
            <person name="Melancon C.E. III"/>
            <person name="Zhang H."/>
            <person name="Liu H.W."/>
        </authorList>
    </citation>
    <scope>FUNCTION</scope>
    <scope>CATALYTIC ACTIVITY</scope>
    <scope>COFACTOR</scope>
    <scope>SUBUNIT</scope>
    <source>
        <strain>NRRL 18537</strain>
    </source>
</reference>
<comment type="function">
    <text evidence="2 3">Involved in the biosynthesis of forosamine ((4-dimethylamino)-2,3,4,6-tetradeoxy-alpha-D-threo-hexopyranose), a highly deoxygenated sugar component of several bioactive natural products such as the insecticidal spinosyns A and D (PubMed:11358695, PubMed:18345667). Catalyzes the dimethylation of the C-4 amino group from dTDP-4-amino-2,3,4,6-tetradeoxy-alpha-D-glucose to yield dTDP-D-forosamine (PubMed:18345667).</text>
</comment>
<comment type="catalytic activity">
    <reaction evidence="7">
        <text>dTDP-4-amino-2,3,4,6-tetradeoxy-alpha-D-erythro-hexopyranose + 2 S-adenosyl-L-methionine = dTDP-alpha-D-forosamine + 2 S-adenosyl-L-homocysteine + 2 H(+)</text>
        <dbReference type="Rhea" id="RHEA:49148"/>
        <dbReference type="ChEBI" id="CHEBI:15378"/>
        <dbReference type="ChEBI" id="CHEBI:57856"/>
        <dbReference type="ChEBI" id="CHEBI:59789"/>
        <dbReference type="ChEBI" id="CHEBI:90945"/>
        <dbReference type="ChEBI" id="CHEBI:90947"/>
        <dbReference type="EC" id="2.1.1.324"/>
    </reaction>
</comment>
<comment type="cofactor">
    <cofactor evidence="3">
        <name>Mg(2+)</name>
        <dbReference type="ChEBI" id="CHEBI:18420"/>
    </cofactor>
</comment>
<comment type="subunit">
    <text evidence="3">Homodimer.</text>
</comment>
<comment type="similarity">
    <text evidence="6">Belongs to the methyltransferase TylM1/DesVI family.</text>
</comment>
<proteinExistence type="evidence at protein level"/>
<dbReference type="EC" id="2.1.1.324" evidence="7"/>
<dbReference type="EMBL" id="AY007564">
    <property type="protein sequence ID" value="AAG23280.1"/>
    <property type="molecule type" value="Genomic_DNA"/>
</dbReference>
<dbReference type="RefSeq" id="WP_044574799.1">
    <property type="nucleotide sequence ID" value="NZ_CP171362.1"/>
</dbReference>
<dbReference type="SMR" id="Q9ALP0"/>
<dbReference type="STRING" id="994479.GCA_000194155_04547"/>
<dbReference type="KEGG" id="ag:AAG23280"/>
<dbReference type="OrthoDB" id="189743at2"/>
<dbReference type="BioCyc" id="MetaCyc:MONOMER-16624"/>
<dbReference type="BRENDA" id="2.1.1.324">
    <property type="organism ID" value="13744"/>
</dbReference>
<dbReference type="GO" id="GO:0046872">
    <property type="term" value="F:metal ion binding"/>
    <property type="evidence" value="ECO:0007669"/>
    <property type="project" value="UniProtKB-KW"/>
</dbReference>
<dbReference type="GO" id="GO:0008168">
    <property type="term" value="F:methyltransferase activity"/>
    <property type="evidence" value="ECO:0007669"/>
    <property type="project" value="UniProtKB-KW"/>
</dbReference>
<dbReference type="GO" id="GO:0032259">
    <property type="term" value="P:methylation"/>
    <property type="evidence" value="ECO:0007669"/>
    <property type="project" value="UniProtKB-KW"/>
</dbReference>
<dbReference type="CDD" id="cd02440">
    <property type="entry name" value="AdoMet_MTases"/>
    <property type="match status" value="1"/>
</dbReference>
<dbReference type="Gene3D" id="2.20.130.10">
    <property type="entry name" value="CAC2371-like domains"/>
    <property type="match status" value="1"/>
</dbReference>
<dbReference type="Gene3D" id="3.40.50.150">
    <property type="entry name" value="Vaccinia Virus protein VP39"/>
    <property type="match status" value="1"/>
</dbReference>
<dbReference type="InterPro" id="IPR041698">
    <property type="entry name" value="Methyltransf_25"/>
</dbReference>
<dbReference type="InterPro" id="IPR050508">
    <property type="entry name" value="Methyltransf_Superfamily"/>
</dbReference>
<dbReference type="InterPro" id="IPR029063">
    <property type="entry name" value="SAM-dependent_MTases_sf"/>
</dbReference>
<dbReference type="PANTHER" id="PTHR42912">
    <property type="entry name" value="METHYLTRANSFERASE"/>
    <property type="match status" value="1"/>
</dbReference>
<dbReference type="PANTHER" id="PTHR42912:SF93">
    <property type="entry name" value="N6-ADENOSINE-METHYLTRANSFERASE TMT1A"/>
    <property type="match status" value="1"/>
</dbReference>
<dbReference type="Pfam" id="PF13649">
    <property type="entry name" value="Methyltransf_25"/>
    <property type="match status" value="1"/>
</dbReference>
<dbReference type="SUPFAM" id="SSF53335">
    <property type="entry name" value="S-adenosyl-L-methionine-dependent methyltransferases"/>
    <property type="match status" value="1"/>
</dbReference>
<gene>
    <name evidence="4" type="primary">spnS</name>
</gene>
<accession>Q9ALP0</accession>
<sequence>MSRVSDTFAETSSVYSPDHADIYDAIHSARGRDWAAEAGEVVQLVRTRLPEAQSLLDVACGTGAHLERFRAEYAKVAGLELSDAMREIAIRRVPEVPIHIGDIRDFDLGEPFDVITCLCFTAAYMRTVDDLRRVTRNMARHLAPGGVAVIEPWWFPDKFIDGFVTGAVAHHGERVISRLSHSVLEGRTSRMTVRYTVAEPTGIRDFTEFEILSLFTEDEYTAALEDAGIRAEYLPGAPNGRGLFVGIRN</sequence>
<evidence type="ECO:0000250" key="1">
    <source>
        <dbReference type="UniProtKB" id="Q9ZGH6"/>
    </source>
</evidence>
<evidence type="ECO:0000269" key="2">
    <source>
    </source>
</evidence>
<evidence type="ECO:0000269" key="3">
    <source>
    </source>
</evidence>
<evidence type="ECO:0000303" key="4">
    <source>
    </source>
</evidence>
<evidence type="ECO:0000303" key="5">
    <source>
    </source>
</evidence>
<evidence type="ECO:0000305" key="6"/>
<evidence type="ECO:0000305" key="7">
    <source>
    </source>
</evidence>
<protein>
    <recommendedName>
        <fullName evidence="5">dTDP-4-amino-2,3,4,6-tetradeoxy-D-glucose N,N-dimethyltransferase</fullName>
        <ecNumber evidence="7">2.1.1.324</ecNumber>
    </recommendedName>
</protein>
<organism>
    <name type="scientific">Saccharopolyspora spinosa</name>
    <dbReference type="NCBI Taxonomy" id="60894"/>
    <lineage>
        <taxon>Bacteria</taxon>
        <taxon>Bacillati</taxon>
        <taxon>Actinomycetota</taxon>
        <taxon>Actinomycetes</taxon>
        <taxon>Pseudonocardiales</taxon>
        <taxon>Pseudonocardiaceae</taxon>
        <taxon>Saccharopolyspora</taxon>
    </lineage>
</organism>
<name>SPNS_SACSN</name>